<feature type="chain" id="PRO_0000218130" description="UPF0339 protein Atu5359">
    <location>
        <begin position="1"/>
        <end position="62"/>
    </location>
</feature>
<sequence length="62" mass="6930">MYKFEVFKDKAGEFRFRFRASNGEIMFSSEGYKAKASVLNAIESIKKNSPGAETVDQTTATV</sequence>
<keyword id="KW-0614">Plasmid</keyword>
<keyword id="KW-1185">Reference proteome</keyword>
<proteinExistence type="inferred from homology"/>
<gene>
    <name type="ordered locus">Atu5359</name>
    <name type="ORF">AGR_pAT_518</name>
</gene>
<dbReference type="EMBL" id="AE007872">
    <property type="protein sequence ID" value="AAK90733.1"/>
    <property type="status" value="ALT_INIT"/>
    <property type="molecule type" value="Genomic_DNA"/>
</dbReference>
<dbReference type="PIR" id="AI3203">
    <property type="entry name" value="AI3203"/>
</dbReference>
<dbReference type="RefSeq" id="NP_396292.1">
    <property type="nucleotide sequence ID" value="NC_003064.2"/>
</dbReference>
<dbReference type="RefSeq" id="WP_035258281.1">
    <property type="nucleotide sequence ID" value="NC_003064.2"/>
</dbReference>
<dbReference type="SMR" id="Q8UJW6"/>
<dbReference type="EnsemblBacteria" id="AAK90733">
    <property type="protein sequence ID" value="AAK90733"/>
    <property type="gene ID" value="Atu5359"/>
</dbReference>
<dbReference type="GeneID" id="1137132"/>
<dbReference type="KEGG" id="atu:Atu5359"/>
<dbReference type="PATRIC" id="fig|176299.10.peg.5032"/>
<dbReference type="eggNOG" id="COG3422">
    <property type="taxonomic scope" value="Bacteria"/>
</dbReference>
<dbReference type="HOGENOM" id="CLU_163886_1_0_5"/>
<dbReference type="OrthoDB" id="9802792at2"/>
<dbReference type="Proteomes" id="UP000000813">
    <property type="component" value="Plasmid At"/>
</dbReference>
<dbReference type="Gene3D" id="3.30.160.160">
    <property type="entry name" value="YegP-like"/>
    <property type="match status" value="1"/>
</dbReference>
<dbReference type="InterPro" id="IPR010879">
    <property type="entry name" value="DUF1508"/>
</dbReference>
<dbReference type="InterPro" id="IPR051141">
    <property type="entry name" value="UPF0339_domain"/>
</dbReference>
<dbReference type="InterPro" id="IPR036913">
    <property type="entry name" value="YegP-like_sf"/>
</dbReference>
<dbReference type="PANTHER" id="PTHR40606">
    <property type="match status" value="1"/>
</dbReference>
<dbReference type="PANTHER" id="PTHR40606:SF1">
    <property type="entry name" value="UPF0339 PROTEIN YEGP"/>
    <property type="match status" value="1"/>
</dbReference>
<dbReference type="Pfam" id="PF07411">
    <property type="entry name" value="DUF1508"/>
    <property type="match status" value="1"/>
</dbReference>
<dbReference type="SUPFAM" id="SSF160113">
    <property type="entry name" value="YegP-like"/>
    <property type="match status" value="1"/>
</dbReference>
<accession>Q8UJW6</accession>
<accession>Q7D399</accession>
<name>Y5359_AGRFC</name>
<organism>
    <name type="scientific">Agrobacterium fabrum (strain C58 / ATCC 33970)</name>
    <name type="common">Agrobacterium tumefaciens (strain C58)</name>
    <dbReference type="NCBI Taxonomy" id="176299"/>
    <lineage>
        <taxon>Bacteria</taxon>
        <taxon>Pseudomonadati</taxon>
        <taxon>Pseudomonadota</taxon>
        <taxon>Alphaproteobacteria</taxon>
        <taxon>Hyphomicrobiales</taxon>
        <taxon>Rhizobiaceae</taxon>
        <taxon>Rhizobium/Agrobacterium group</taxon>
        <taxon>Agrobacterium</taxon>
        <taxon>Agrobacterium tumefaciens complex</taxon>
    </lineage>
</organism>
<reference key="1">
    <citation type="journal article" date="2001" name="Science">
        <title>The genome of the natural genetic engineer Agrobacterium tumefaciens C58.</title>
        <authorList>
            <person name="Wood D.W."/>
            <person name="Setubal J.C."/>
            <person name="Kaul R."/>
            <person name="Monks D.E."/>
            <person name="Kitajima J.P."/>
            <person name="Okura V.K."/>
            <person name="Zhou Y."/>
            <person name="Chen L."/>
            <person name="Wood G.E."/>
            <person name="Almeida N.F. Jr."/>
            <person name="Woo L."/>
            <person name="Chen Y."/>
            <person name="Paulsen I.T."/>
            <person name="Eisen J.A."/>
            <person name="Karp P.D."/>
            <person name="Bovee D. Sr."/>
            <person name="Chapman P."/>
            <person name="Clendenning J."/>
            <person name="Deatherage G."/>
            <person name="Gillet W."/>
            <person name="Grant C."/>
            <person name="Kutyavin T."/>
            <person name="Levy R."/>
            <person name="Li M.-J."/>
            <person name="McClelland E."/>
            <person name="Palmieri A."/>
            <person name="Raymond C."/>
            <person name="Rouse G."/>
            <person name="Saenphimmachak C."/>
            <person name="Wu Z."/>
            <person name="Romero P."/>
            <person name="Gordon D."/>
            <person name="Zhang S."/>
            <person name="Yoo H."/>
            <person name="Tao Y."/>
            <person name="Biddle P."/>
            <person name="Jung M."/>
            <person name="Krespan W."/>
            <person name="Perry M."/>
            <person name="Gordon-Kamm B."/>
            <person name="Liao L."/>
            <person name="Kim S."/>
            <person name="Hendrick C."/>
            <person name="Zhao Z.-Y."/>
            <person name="Dolan M."/>
            <person name="Chumley F."/>
            <person name="Tingey S.V."/>
            <person name="Tomb J.-F."/>
            <person name="Gordon M.P."/>
            <person name="Olson M.V."/>
            <person name="Nester E.W."/>
        </authorList>
    </citation>
    <scope>NUCLEOTIDE SEQUENCE [LARGE SCALE GENOMIC DNA]</scope>
</reference>
<reference key="2">
    <citation type="journal article" date="2001" name="Science">
        <title>Genome sequence of the plant pathogen and biotechnology agent Agrobacterium tumefaciens C58.</title>
        <authorList>
            <person name="Goodner B."/>
            <person name="Hinkle G."/>
            <person name="Gattung S."/>
            <person name="Miller N."/>
            <person name="Blanchard M."/>
            <person name="Qurollo B."/>
            <person name="Goldman B.S."/>
            <person name="Cao Y."/>
            <person name="Askenazi M."/>
            <person name="Halling C."/>
            <person name="Mullin L."/>
            <person name="Houmiel K."/>
            <person name="Gordon J."/>
            <person name="Vaudin M."/>
            <person name="Iartchouk O."/>
            <person name="Epp A."/>
            <person name="Liu F."/>
            <person name="Wollam C."/>
            <person name="Allinger M."/>
            <person name="Doughty D."/>
            <person name="Scott C."/>
            <person name="Lappas C."/>
            <person name="Markelz B."/>
            <person name="Flanagan C."/>
            <person name="Crowell C."/>
            <person name="Gurson J."/>
            <person name="Lomo C."/>
            <person name="Sear C."/>
            <person name="Strub G."/>
            <person name="Cielo C."/>
            <person name="Slater S."/>
        </authorList>
    </citation>
    <scope>NUCLEOTIDE SEQUENCE [LARGE SCALE GENOMIC DNA]</scope>
    <source>
        <strain>C58 / ATCC 33970</strain>
    </source>
</reference>
<comment type="similarity">
    <text evidence="1">Belongs to the UPF0339 family.</text>
</comment>
<comment type="sequence caution" evidence="1">
    <conflict type="erroneous initiation">
        <sequence resource="EMBL-CDS" id="AAK90733"/>
    </conflict>
</comment>
<geneLocation type="plasmid">
    <name>AT</name>
</geneLocation>
<protein>
    <recommendedName>
        <fullName>UPF0339 protein Atu5359</fullName>
    </recommendedName>
</protein>
<evidence type="ECO:0000305" key="1"/>